<name>FABG_STAES</name>
<dbReference type="EC" id="1.1.1.100"/>
<dbReference type="EMBL" id="AE015929">
    <property type="protein sequence ID" value="AAO04503.1"/>
    <property type="molecule type" value="Genomic_DNA"/>
</dbReference>
<dbReference type="RefSeq" id="NP_764461.1">
    <property type="nucleotide sequence ID" value="NC_004461.1"/>
</dbReference>
<dbReference type="RefSeq" id="WP_001830161.1">
    <property type="nucleotide sequence ID" value="NZ_WBME01000001.1"/>
</dbReference>
<dbReference type="SMR" id="Q8CPI3"/>
<dbReference type="GeneID" id="50018956"/>
<dbReference type="KEGG" id="sep:SE_0906"/>
<dbReference type="PATRIC" id="fig|176280.10.peg.879"/>
<dbReference type="eggNOG" id="COG1028">
    <property type="taxonomic scope" value="Bacteria"/>
</dbReference>
<dbReference type="HOGENOM" id="CLU_010194_1_3_9"/>
<dbReference type="OrthoDB" id="9803333at2"/>
<dbReference type="UniPathway" id="UPA00094"/>
<dbReference type="Proteomes" id="UP000001411">
    <property type="component" value="Chromosome"/>
</dbReference>
<dbReference type="GO" id="GO:0004316">
    <property type="term" value="F:3-oxoacyl-[acyl-carrier-protein] reductase (NADPH) activity"/>
    <property type="evidence" value="ECO:0000250"/>
    <property type="project" value="UniProtKB"/>
</dbReference>
<dbReference type="GO" id="GO:0051287">
    <property type="term" value="F:NAD binding"/>
    <property type="evidence" value="ECO:0007669"/>
    <property type="project" value="InterPro"/>
</dbReference>
<dbReference type="GO" id="GO:0050661">
    <property type="term" value="F:NADP binding"/>
    <property type="evidence" value="ECO:0000250"/>
    <property type="project" value="UniProtKB"/>
</dbReference>
<dbReference type="GO" id="GO:0030497">
    <property type="term" value="P:fatty acid elongation"/>
    <property type="evidence" value="ECO:0000250"/>
    <property type="project" value="UniProtKB"/>
</dbReference>
<dbReference type="CDD" id="cd05333">
    <property type="entry name" value="BKR_SDR_c"/>
    <property type="match status" value="1"/>
</dbReference>
<dbReference type="FunFam" id="3.40.50.720:FF:000037">
    <property type="entry name" value="3-oxoacyl-[acyl-carrier-protein] reductase FabG"/>
    <property type="match status" value="1"/>
</dbReference>
<dbReference type="Gene3D" id="3.40.50.720">
    <property type="entry name" value="NAD(P)-binding Rossmann-like Domain"/>
    <property type="match status" value="1"/>
</dbReference>
<dbReference type="InterPro" id="IPR011284">
    <property type="entry name" value="3oxo_ACP_reduc"/>
</dbReference>
<dbReference type="InterPro" id="IPR036291">
    <property type="entry name" value="NAD(P)-bd_dom_sf"/>
</dbReference>
<dbReference type="InterPro" id="IPR020904">
    <property type="entry name" value="Sc_DH/Rdtase_CS"/>
</dbReference>
<dbReference type="InterPro" id="IPR050259">
    <property type="entry name" value="SDR"/>
</dbReference>
<dbReference type="InterPro" id="IPR002347">
    <property type="entry name" value="SDR_fam"/>
</dbReference>
<dbReference type="NCBIfam" id="TIGR01830">
    <property type="entry name" value="3oxo_ACP_reduc"/>
    <property type="match status" value="1"/>
</dbReference>
<dbReference type="NCBIfam" id="NF004198">
    <property type="entry name" value="PRK05653.1-3"/>
    <property type="match status" value="1"/>
</dbReference>
<dbReference type="NCBIfam" id="NF004199">
    <property type="entry name" value="PRK05653.1-4"/>
    <property type="match status" value="1"/>
</dbReference>
<dbReference type="NCBIfam" id="NF004200">
    <property type="entry name" value="PRK05653.1-5"/>
    <property type="match status" value="1"/>
</dbReference>
<dbReference type="NCBIfam" id="NF005559">
    <property type="entry name" value="PRK07231.1"/>
    <property type="match status" value="1"/>
</dbReference>
<dbReference type="NCBIfam" id="NF009464">
    <property type="entry name" value="PRK12824.1"/>
    <property type="match status" value="1"/>
</dbReference>
<dbReference type="NCBIfam" id="NF009466">
    <property type="entry name" value="PRK12826.1-2"/>
    <property type="match status" value="1"/>
</dbReference>
<dbReference type="PANTHER" id="PTHR42879">
    <property type="entry name" value="3-OXOACYL-(ACYL-CARRIER-PROTEIN) REDUCTASE"/>
    <property type="match status" value="1"/>
</dbReference>
<dbReference type="PANTHER" id="PTHR42879:SF2">
    <property type="entry name" value="3-OXOACYL-[ACYL-CARRIER-PROTEIN] REDUCTASE FABG"/>
    <property type="match status" value="1"/>
</dbReference>
<dbReference type="Pfam" id="PF13561">
    <property type="entry name" value="adh_short_C2"/>
    <property type="match status" value="1"/>
</dbReference>
<dbReference type="PRINTS" id="PR00081">
    <property type="entry name" value="GDHRDH"/>
</dbReference>
<dbReference type="PRINTS" id="PR00080">
    <property type="entry name" value="SDRFAMILY"/>
</dbReference>
<dbReference type="SMART" id="SM00822">
    <property type="entry name" value="PKS_KR"/>
    <property type="match status" value="1"/>
</dbReference>
<dbReference type="SUPFAM" id="SSF51735">
    <property type="entry name" value="NAD(P)-binding Rossmann-fold domains"/>
    <property type="match status" value="1"/>
</dbReference>
<dbReference type="PROSITE" id="PS00061">
    <property type="entry name" value="ADH_SHORT"/>
    <property type="match status" value="1"/>
</dbReference>
<accession>Q8CPI3</accession>
<proteinExistence type="inferred from homology"/>
<keyword id="KW-0275">Fatty acid biosynthesis</keyword>
<keyword id="KW-0276">Fatty acid metabolism</keyword>
<keyword id="KW-0444">Lipid biosynthesis</keyword>
<keyword id="KW-0443">Lipid metabolism</keyword>
<keyword id="KW-0521">NADP</keyword>
<keyword id="KW-0560">Oxidoreductase</keyword>
<protein>
    <recommendedName>
        <fullName>3-oxoacyl-[acyl-carrier-protein] reductase FabG</fullName>
        <ecNumber>1.1.1.100</ecNumber>
    </recommendedName>
    <alternativeName>
        <fullName>3-ketoacyl-acyl carrier protein reductase</fullName>
    </alternativeName>
    <alternativeName>
        <fullName>Beta-Ketoacyl-acyl carrier protein reductase</fullName>
    </alternativeName>
    <alternativeName>
        <fullName>Beta-ketoacyl-ACP reductase</fullName>
    </alternativeName>
</protein>
<reference key="1">
    <citation type="journal article" date="2003" name="Mol. Microbiol.">
        <title>Genome-based analysis of virulence genes in a non-biofilm-forming Staphylococcus epidermidis strain (ATCC 12228).</title>
        <authorList>
            <person name="Zhang Y.-Q."/>
            <person name="Ren S.-X."/>
            <person name="Li H.-L."/>
            <person name="Wang Y.-X."/>
            <person name="Fu G."/>
            <person name="Yang J."/>
            <person name="Qin Z.-Q."/>
            <person name="Miao Y.-G."/>
            <person name="Wang W.-Y."/>
            <person name="Chen R.-S."/>
            <person name="Shen Y."/>
            <person name="Chen Z."/>
            <person name="Yuan Z.-H."/>
            <person name="Zhao G.-P."/>
            <person name="Qu D."/>
            <person name="Danchin A."/>
            <person name="Wen Y.-M."/>
        </authorList>
    </citation>
    <scope>NUCLEOTIDE SEQUENCE [LARGE SCALE GENOMIC DNA]</scope>
    <source>
        <strain>ATCC 12228 / FDA PCI 1200</strain>
    </source>
</reference>
<feature type="chain" id="PRO_0000054689" description="3-oxoacyl-[acyl-carrier-protein] reductase FabG">
    <location>
        <begin position="1"/>
        <end position="244"/>
    </location>
</feature>
<feature type="active site" description="Proton acceptor" evidence="2">
    <location>
        <position position="152"/>
    </location>
</feature>
<feature type="binding site" evidence="1">
    <location>
        <begin position="9"/>
        <end position="12"/>
    </location>
    <ligand>
        <name>NADP(+)</name>
        <dbReference type="ChEBI" id="CHEBI:58349"/>
    </ligand>
</feature>
<feature type="binding site" evidence="1">
    <location>
        <begin position="60"/>
        <end position="61"/>
    </location>
    <ligand>
        <name>NADP(+)</name>
        <dbReference type="ChEBI" id="CHEBI:58349"/>
    </ligand>
</feature>
<feature type="binding site" evidence="1">
    <location>
        <position position="87"/>
    </location>
    <ligand>
        <name>NADP(+)</name>
        <dbReference type="ChEBI" id="CHEBI:58349"/>
    </ligand>
</feature>
<feature type="binding site" evidence="1">
    <location>
        <position position="139"/>
    </location>
    <ligand>
        <name>substrate</name>
    </ligand>
</feature>
<feature type="binding site" evidence="1">
    <location>
        <begin position="152"/>
        <end position="156"/>
    </location>
    <ligand>
        <name>NADP(+)</name>
        <dbReference type="ChEBI" id="CHEBI:58349"/>
    </ligand>
</feature>
<feature type="binding site" evidence="1">
    <location>
        <position position="185"/>
    </location>
    <ligand>
        <name>NADP(+)</name>
        <dbReference type="ChEBI" id="CHEBI:58349"/>
    </ligand>
</feature>
<sequence>MNKSALVTGASRGIGRSIALQLAEEGYNVAVNYAGSKDKAEAVVEEIKAKGVESFAIQANVAKGDEVKEMIKEVVSQFGSVDVLVNNAGITKDNLLMRMKEQEWDDVIDTNLKGVFNCIQKVTPQMLRQRSGAIINLTSIVGAMGNPGQANYVATKAGVIGLTKTAARELASRGITVNAVAPGFIVSDMTNALSDDLKDQMLEQIPLKRFGEDTDIANTVAFLASDKAKYITGQTIHVNGGMYM</sequence>
<gene>
    <name type="primary">fabG</name>
    <name type="ordered locus">SE_0906</name>
</gene>
<evidence type="ECO:0000250" key="1"/>
<evidence type="ECO:0000255" key="2">
    <source>
        <dbReference type="PROSITE-ProRule" id="PRU10001"/>
    </source>
</evidence>
<evidence type="ECO:0000305" key="3"/>
<organism>
    <name type="scientific">Staphylococcus epidermidis (strain ATCC 12228 / FDA PCI 1200)</name>
    <dbReference type="NCBI Taxonomy" id="176280"/>
    <lineage>
        <taxon>Bacteria</taxon>
        <taxon>Bacillati</taxon>
        <taxon>Bacillota</taxon>
        <taxon>Bacilli</taxon>
        <taxon>Bacillales</taxon>
        <taxon>Staphylococcaceae</taxon>
        <taxon>Staphylococcus</taxon>
    </lineage>
</organism>
<comment type="function">
    <text evidence="1">Catalyzes the NADPH-dependent reduction of beta-ketoacyl-ACP substrates to beta-hydroxyacyl-ACP products, the first reductive step in the elongation cycle of fatty acid biosynthesis.</text>
</comment>
<comment type="catalytic activity">
    <reaction>
        <text>a (3R)-hydroxyacyl-[ACP] + NADP(+) = a 3-oxoacyl-[ACP] + NADPH + H(+)</text>
        <dbReference type="Rhea" id="RHEA:17397"/>
        <dbReference type="Rhea" id="RHEA-COMP:9916"/>
        <dbReference type="Rhea" id="RHEA-COMP:9945"/>
        <dbReference type="ChEBI" id="CHEBI:15378"/>
        <dbReference type="ChEBI" id="CHEBI:57783"/>
        <dbReference type="ChEBI" id="CHEBI:58349"/>
        <dbReference type="ChEBI" id="CHEBI:78776"/>
        <dbReference type="ChEBI" id="CHEBI:78827"/>
        <dbReference type="EC" id="1.1.1.100"/>
    </reaction>
</comment>
<comment type="pathway">
    <text>Lipid metabolism; fatty acid biosynthesis.</text>
</comment>
<comment type="subunit">
    <text evidence="1">Homotetramer.</text>
</comment>
<comment type="similarity">
    <text evidence="3">Belongs to the short-chain dehydrogenases/reductases (SDR) family.</text>
</comment>